<comment type="function">
    <text evidence="1">Catalyzes the synthesis of N-((2S)-2-amino-2-carboxyethyl)-L-glutamate (ACEGA) from O-phospho-L-serine and L-glutamate.</text>
</comment>
<comment type="catalytic activity">
    <reaction evidence="1">
        <text>O-phospho-L-serine + L-glutamate = N-[(2S)-2-amino-2-carboxyethyl]-L-glutamate + phosphate + H(+)</text>
        <dbReference type="Rhea" id="RHEA:52384"/>
        <dbReference type="ChEBI" id="CHEBI:15378"/>
        <dbReference type="ChEBI" id="CHEBI:29985"/>
        <dbReference type="ChEBI" id="CHEBI:43474"/>
        <dbReference type="ChEBI" id="CHEBI:57524"/>
        <dbReference type="ChEBI" id="CHEBI:134610"/>
        <dbReference type="EC" id="2.5.1.140"/>
    </reaction>
</comment>
<comment type="cofactor">
    <cofactor evidence="1">
        <name>pyridoxal 5'-phosphate</name>
        <dbReference type="ChEBI" id="CHEBI:597326"/>
    </cofactor>
</comment>
<comment type="pathway">
    <text evidence="1">Siderophore biosynthesis.</text>
</comment>
<comment type="subunit">
    <text evidence="1">Homodimer.</text>
</comment>
<comment type="similarity">
    <text evidence="2">Belongs to the cysteine synthase/cystathionine beta-synthase family. SbnA subfamily.</text>
</comment>
<protein>
    <recommendedName>
        <fullName evidence="2">N-(2-amino-2-carboxyethyl)-L-glutamate synthase</fullName>
        <shortName evidence="2">ACEGA synthase</shortName>
        <ecNumber evidence="1">2.5.1.140</ecNumber>
    </recommendedName>
</protein>
<dbReference type="EC" id="2.5.1.140" evidence="1"/>
<dbReference type="EMBL" id="X97499">
    <property type="protein sequence ID" value="CAA66130.1"/>
    <property type="molecule type" value="Genomic_DNA"/>
</dbReference>
<dbReference type="EMBL" id="CP000352">
    <property type="protein sequence ID" value="ABF08003.1"/>
    <property type="molecule type" value="Genomic_DNA"/>
</dbReference>
<dbReference type="RefSeq" id="WP_011515904.1">
    <property type="nucleotide sequence ID" value="NC_007973.1"/>
</dbReference>
<dbReference type="SMR" id="Q44004"/>
<dbReference type="STRING" id="266264.Rmet_1117"/>
<dbReference type="KEGG" id="rme:Rmet_1117"/>
<dbReference type="eggNOG" id="COG0031">
    <property type="taxonomic scope" value="Bacteria"/>
</dbReference>
<dbReference type="HOGENOM" id="CLU_021018_1_0_4"/>
<dbReference type="Proteomes" id="UP000002429">
    <property type="component" value="Chromosome"/>
</dbReference>
<dbReference type="GO" id="GO:0016765">
    <property type="term" value="F:transferase activity, transferring alkyl or aryl (other than methyl) groups"/>
    <property type="evidence" value="ECO:0007669"/>
    <property type="project" value="UniProtKB-ARBA"/>
</dbReference>
<dbReference type="GO" id="GO:0006535">
    <property type="term" value="P:cysteine biosynthetic process from serine"/>
    <property type="evidence" value="ECO:0007669"/>
    <property type="project" value="InterPro"/>
</dbReference>
<dbReference type="CDD" id="cd01561">
    <property type="entry name" value="CBS_like"/>
    <property type="match status" value="1"/>
</dbReference>
<dbReference type="Gene3D" id="3.40.50.1100">
    <property type="match status" value="2"/>
</dbReference>
<dbReference type="InterPro" id="IPR050214">
    <property type="entry name" value="Cys_Synth/Cystath_Beta-Synth"/>
</dbReference>
<dbReference type="InterPro" id="IPR001216">
    <property type="entry name" value="P-phosphate_BS"/>
</dbReference>
<dbReference type="InterPro" id="IPR023927">
    <property type="entry name" value="SbnA"/>
</dbReference>
<dbReference type="InterPro" id="IPR001926">
    <property type="entry name" value="TrpB-like_PALP"/>
</dbReference>
<dbReference type="InterPro" id="IPR036052">
    <property type="entry name" value="TrpB-like_PALP_sf"/>
</dbReference>
<dbReference type="NCBIfam" id="TIGR03945">
    <property type="entry name" value="PLP_SbnA_fam"/>
    <property type="match status" value="1"/>
</dbReference>
<dbReference type="PANTHER" id="PTHR10314">
    <property type="entry name" value="CYSTATHIONINE BETA-SYNTHASE"/>
    <property type="match status" value="1"/>
</dbReference>
<dbReference type="Pfam" id="PF00291">
    <property type="entry name" value="PALP"/>
    <property type="match status" value="1"/>
</dbReference>
<dbReference type="SUPFAM" id="SSF53686">
    <property type="entry name" value="Tryptophan synthase beta subunit-like PLP-dependent enzymes"/>
    <property type="match status" value="1"/>
</dbReference>
<dbReference type="PROSITE" id="PS00901">
    <property type="entry name" value="CYS_SYNTHASE"/>
    <property type="match status" value="1"/>
</dbReference>
<feature type="chain" id="PRO_0000167105" description="N-(2-amino-2-carboxyethyl)-L-glutamate synthase">
    <location>
        <begin position="1"/>
        <end position="341"/>
    </location>
</feature>
<feature type="binding site" evidence="1">
    <location>
        <position position="73"/>
    </location>
    <ligand>
        <name>pyridoxal 5'-phosphate</name>
        <dbReference type="ChEBI" id="CHEBI:597326"/>
    </ligand>
</feature>
<feature type="binding site" evidence="1">
    <location>
        <begin position="181"/>
        <end position="185"/>
    </location>
    <ligand>
        <name>pyridoxal 5'-phosphate</name>
        <dbReference type="ChEBI" id="CHEBI:597326"/>
    </ligand>
</feature>
<feature type="binding site" evidence="1">
    <location>
        <position position="268"/>
    </location>
    <ligand>
        <name>pyridoxal 5'-phosphate</name>
        <dbReference type="ChEBI" id="CHEBI:597326"/>
    </ligand>
</feature>
<feature type="modified residue" description="N6-(pyridoxal phosphate)lysine" evidence="1">
    <location>
        <position position="43"/>
    </location>
</feature>
<feature type="sequence conflict" description="In Ref. 1; CAA66130." evidence="2" ref="1">
    <original>QL</original>
    <variation>HV</variation>
    <location>
        <begin position="17"/>
        <end position="18"/>
    </location>
</feature>
<feature type="sequence conflict" description="In Ref. 1; CAA66130." evidence="2" ref="1">
    <original>QL</original>
    <variation>HV</variation>
    <location>
        <begin position="168"/>
        <end position="169"/>
    </location>
</feature>
<feature type="sequence conflict" description="In Ref. 1; CAA66130." evidence="2" ref="1">
    <original>S</original>
    <variation>T</variation>
    <location>
        <position position="181"/>
    </location>
</feature>
<feature type="sequence conflict" description="In Ref. 1; CAA66130." evidence="2" ref="1">
    <original>GSVLFGQPSQARELPGIGASRVPELLCRDEIDEVIHIDDYTAATACRRLLAREGIFA</original>
    <variation>FPCCSANRRKRASCRALAPRRAGIAVPGRDRRSDPYRRLHRRHGAGACWRRRHLR</variation>
    <location>
        <begin position="209"/>
        <end position="265"/>
    </location>
</feature>
<feature type="sequence conflict" description="In Ref. 1; CAA66130." evidence="2" ref="1">
    <original>R</original>
    <variation>T</variation>
    <location>
        <position position="320"/>
    </location>
</feature>
<proteinExistence type="inferred from homology"/>
<accession>Q44004</accession>
<accession>Q1LPC3</accession>
<reference key="1">
    <citation type="journal article" date="1996" name="J. Bacteriol.">
        <title>Siderophore-mediated iron uptake in Alcaligenes eutrophus CH34 and identification of aleB encoding the ferric iron-alcaligin E receptor.</title>
        <authorList>
            <person name="Gilis A."/>
            <person name="Khan M.A."/>
            <person name="Cornelis P."/>
            <person name="Meyer J.M."/>
            <person name="Mergeay M."/>
            <person name="van der Lelie D."/>
        </authorList>
    </citation>
    <scope>NUCLEOTIDE SEQUENCE [GENOMIC DNA]</scope>
</reference>
<reference key="2">
    <citation type="journal article" date="2010" name="PLoS ONE">
        <title>The complete genome sequence of Cupriavidus metallidurans strain CH34, a master survivalist in harsh and anthropogenic environments.</title>
        <authorList>
            <person name="Janssen P.J."/>
            <person name="Van Houdt R."/>
            <person name="Moors H."/>
            <person name="Monsieurs P."/>
            <person name="Morin N."/>
            <person name="Michaux A."/>
            <person name="Benotmane M.A."/>
            <person name="Leys N."/>
            <person name="Vallaeys T."/>
            <person name="Lapidus A."/>
            <person name="Monchy S."/>
            <person name="Medigue C."/>
            <person name="Taghavi S."/>
            <person name="McCorkle S."/>
            <person name="Dunn J."/>
            <person name="van der Lelie D."/>
            <person name="Mergeay M."/>
        </authorList>
    </citation>
    <scope>NUCLEOTIDE SEQUENCE [LARGE SCALE GENOMIC DNA]</scope>
    <source>
        <strain>ATCC 43123 / DSM 2839 / NBRC 102507 / CH34</strain>
    </source>
</reference>
<organism>
    <name type="scientific">Cupriavidus metallidurans (strain ATCC 43123 / DSM 2839 / NBRC 102507 / CH34)</name>
    <name type="common">Ralstonia metallidurans</name>
    <dbReference type="NCBI Taxonomy" id="266264"/>
    <lineage>
        <taxon>Bacteria</taxon>
        <taxon>Pseudomonadati</taxon>
        <taxon>Pseudomonadota</taxon>
        <taxon>Betaproteobacteria</taxon>
        <taxon>Burkholderiales</taxon>
        <taxon>Burkholderiaceae</taxon>
        <taxon>Cupriavidus</taxon>
    </lineage>
</organism>
<gene>
    <name type="primary">sbnA</name>
    <name type="ordered locus">Rmet_1117</name>
</gene>
<sequence length="341" mass="36838">MVCNSIIESIGNTPLVQLRRLFGRADAEVFAKLELLNPAGSVKDRPARYIVEKGLTEGAIGPHSHVIESSSGNLAIALAMICGLKGLRFTAVVDPKISPTNLKILRCYGAGIEQVTAKDSQGGYLETRIERVRQMLREQRDAIWINQYANPLNWESHYYGEAAEILAQLAQPADVLVLGVSTSGTVHGIARRLRKAWPSMRVVGVDAVGSVLFGQPSQARELPGIGASRVPELLCRDEIDEVIHIDDYTAATACRRLLAREGIFAGGSSGAVVAAIEQVLHATPVSHRPLRILTLFPDRGERYLDTVYDDAWLARIAARRAVPNLAALPTVASLIPAGVSA</sequence>
<name>SBNA_CUPMC</name>
<keyword id="KW-0663">Pyridoxal phosphate</keyword>
<keyword id="KW-1185">Reference proteome</keyword>
<keyword id="KW-0808">Transferase</keyword>
<evidence type="ECO:0000250" key="1">
    <source>
        <dbReference type="UniProtKB" id="A6QDA0"/>
    </source>
</evidence>
<evidence type="ECO:0000305" key="2"/>